<sequence length="157" mass="17498">MATMHDKITLQLPAKPEYVSLGRLSLSGIASRAGFSYEAIEDLKIAVSEAITNSVKHAFKGEDDGEITVEYLIYEDKLEVRVSDNGTSFDLETRKQEIGPYEVGEDAEMMRIGGLGLFLIETLMDDVKLYYDEGVSVVMTKYINEKQVEENAKSIST</sequence>
<keyword id="KW-0067">ATP-binding</keyword>
<keyword id="KW-0418">Kinase</keyword>
<keyword id="KW-0547">Nucleotide-binding</keyword>
<keyword id="KW-0723">Serine/threonine-protein kinase</keyword>
<keyword id="KW-0808">Transferase</keyword>
<name>RSBW_LISMC</name>
<accession>C1L1G4</accession>
<organism>
    <name type="scientific">Listeria monocytogenes serotype 4b (strain CLIP80459)</name>
    <dbReference type="NCBI Taxonomy" id="568819"/>
    <lineage>
        <taxon>Bacteria</taxon>
        <taxon>Bacillati</taxon>
        <taxon>Bacillota</taxon>
        <taxon>Bacilli</taxon>
        <taxon>Bacillales</taxon>
        <taxon>Listeriaceae</taxon>
        <taxon>Listeria</taxon>
    </lineage>
</organism>
<protein>
    <recommendedName>
        <fullName evidence="1">Serine-protein kinase RsbW</fullName>
        <ecNumber evidence="1">2.7.11.1</ecNumber>
    </recommendedName>
    <alternativeName>
        <fullName evidence="1">Anti-sigma-B factor</fullName>
    </alternativeName>
    <alternativeName>
        <fullName evidence="1">Sigma-B negative effector RsbW</fullName>
    </alternativeName>
</protein>
<evidence type="ECO:0000255" key="1">
    <source>
        <dbReference type="HAMAP-Rule" id="MF_00638"/>
    </source>
</evidence>
<gene>
    <name evidence="1" type="primary">rsbW</name>
    <name type="ordered locus">Lm4b_00912</name>
</gene>
<reference key="1">
    <citation type="journal article" date="2012" name="BMC Genomics">
        <title>Comparative genomics and transcriptomics of lineages I, II, and III strains of Listeria monocytogenes.</title>
        <authorList>
            <person name="Hain T."/>
            <person name="Ghai R."/>
            <person name="Billion A."/>
            <person name="Kuenne C.T."/>
            <person name="Steinweg C."/>
            <person name="Izar B."/>
            <person name="Mohamed W."/>
            <person name="Mraheil M."/>
            <person name="Domann E."/>
            <person name="Schaffrath S."/>
            <person name="Karst U."/>
            <person name="Goesmann A."/>
            <person name="Oehm S."/>
            <person name="Puhler A."/>
            <person name="Merkl R."/>
            <person name="Vorwerk S."/>
            <person name="Glaser P."/>
            <person name="Garrido P."/>
            <person name="Rusniok C."/>
            <person name="Buchrieser C."/>
            <person name="Goebel W."/>
            <person name="Chakraborty T."/>
        </authorList>
    </citation>
    <scope>NUCLEOTIDE SEQUENCE [LARGE SCALE GENOMIC DNA]</scope>
    <source>
        <strain>CLIP80459</strain>
    </source>
</reference>
<feature type="chain" id="PRO_1000212369" description="Serine-protein kinase RsbW">
    <location>
        <begin position="1"/>
        <end position="157"/>
    </location>
</feature>
<dbReference type="EC" id="2.7.11.1" evidence="1"/>
<dbReference type="EMBL" id="FM242711">
    <property type="protein sequence ID" value="CAS04679.1"/>
    <property type="molecule type" value="Genomic_DNA"/>
</dbReference>
<dbReference type="RefSeq" id="WP_003724820.1">
    <property type="nucleotide sequence ID" value="NC_012488.1"/>
</dbReference>
<dbReference type="SMR" id="C1L1G4"/>
<dbReference type="KEGG" id="lmc:Lm4b_00912"/>
<dbReference type="HOGENOM" id="CLU_090336_11_1_9"/>
<dbReference type="GO" id="GO:0005524">
    <property type="term" value="F:ATP binding"/>
    <property type="evidence" value="ECO:0007669"/>
    <property type="project" value="UniProtKB-KW"/>
</dbReference>
<dbReference type="GO" id="GO:0106310">
    <property type="term" value="F:protein serine kinase activity"/>
    <property type="evidence" value="ECO:0007669"/>
    <property type="project" value="RHEA"/>
</dbReference>
<dbReference type="GO" id="GO:0004674">
    <property type="term" value="F:protein serine/threonine kinase activity"/>
    <property type="evidence" value="ECO:0007669"/>
    <property type="project" value="UniProtKB-KW"/>
</dbReference>
<dbReference type="GO" id="GO:0016989">
    <property type="term" value="F:sigma factor antagonist activity"/>
    <property type="evidence" value="ECO:0007669"/>
    <property type="project" value="InterPro"/>
</dbReference>
<dbReference type="CDD" id="cd16936">
    <property type="entry name" value="HATPase_RsbW-like"/>
    <property type="match status" value="1"/>
</dbReference>
<dbReference type="FunFam" id="3.30.565.10:FF:000026">
    <property type="entry name" value="Serine-protein kinase RsbW"/>
    <property type="match status" value="1"/>
</dbReference>
<dbReference type="Gene3D" id="3.30.565.10">
    <property type="entry name" value="Histidine kinase-like ATPase, C-terminal domain"/>
    <property type="match status" value="1"/>
</dbReference>
<dbReference type="HAMAP" id="MF_00638">
    <property type="entry name" value="Anti_sigma_B"/>
    <property type="match status" value="1"/>
</dbReference>
<dbReference type="InterPro" id="IPR050267">
    <property type="entry name" value="Anti-sigma-factor_SerPK"/>
</dbReference>
<dbReference type="InterPro" id="IPR036890">
    <property type="entry name" value="HATPase_C_sf"/>
</dbReference>
<dbReference type="InterPro" id="IPR010193">
    <property type="entry name" value="RsbW"/>
</dbReference>
<dbReference type="NCBIfam" id="NF003144">
    <property type="entry name" value="PRK04069.1"/>
    <property type="match status" value="1"/>
</dbReference>
<dbReference type="NCBIfam" id="TIGR01924">
    <property type="entry name" value="rsbW_low_gc"/>
    <property type="match status" value="1"/>
</dbReference>
<dbReference type="PANTHER" id="PTHR35526">
    <property type="entry name" value="ANTI-SIGMA-F FACTOR RSBW-RELATED"/>
    <property type="match status" value="1"/>
</dbReference>
<dbReference type="PANTHER" id="PTHR35526:SF9">
    <property type="entry name" value="SERINE-PROTEIN KINASE RSBW"/>
    <property type="match status" value="1"/>
</dbReference>
<dbReference type="Pfam" id="PF13581">
    <property type="entry name" value="HATPase_c_2"/>
    <property type="match status" value="1"/>
</dbReference>
<dbReference type="SUPFAM" id="SSF55874">
    <property type="entry name" value="ATPase domain of HSP90 chaperone/DNA topoisomerase II/histidine kinase"/>
    <property type="match status" value="1"/>
</dbReference>
<proteinExistence type="inferred from homology"/>
<comment type="function">
    <text evidence="1">Negative regulator of sigma-B activity. Phosphorylates and inactivates its specific antagonist protein, RsbV. Upon phosphorylation of RsbV, RsbW is released and binds to sigma-B, thereby blocking its ability to form an RNA polymerase holoenzyme (E-sigma-B).</text>
</comment>
<comment type="catalytic activity">
    <reaction evidence="1">
        <text>L-seryl-[protein] + ATP = O-phospho-L-seryl-[protein] + ADP + H(+)</text>
        <dbReference type="Rhea" id="RHEA:17989"/>
        <dbReference type="Rhea" id="RHEA-COMP:9863"/>
        <dbReference type="Rhea" id="RHEA-COMP:11604"/>
        <dbReference type="ChEBI" id="CHEBI:15378"/>
        <dbReference type="ChEBI" id="CHEBI:29999"/>
        <dbReference type="ChEBI" id="CHEBI:30616"/>
        <dbReference type="ChEBI" id="CHEBI:83421"/>
        <dbReference type="ChEBI" id="CHEBI:456216"/>
        <dbReference type="EC" id="2.7.11.1"/>
    </reaction>
</comment>
<comment type="catalytic activity">
    <reaction evidence="1">
        <text>L-threonyl-[protein] + ATP = O-phospho-L-threonyl-[protein] + ADP + H(+)</text>
        <dbReference type="Rhea" id="RHEA:46608"/>
        <dbReference type="Rhea" id="RHEA-COMP:11060"/>
        <dbReference type="Rhea" id="RHEA-COMP:11605"/>
        <dbReference type="ChEBI" id="CHEBI:15378"/>
        <dbReference type="ChEBI" id="CHEBI:30013"/>
        <dbReference type="ChEBI" id="CHEBI:30616"/>
        <dbReference type="ChEBI" id="CHEBI:61977"/>
        <dbReference type="ChEBI" id="CHEBI:456216"/>
        <dbReference type="EC" id="2.7.11.1"/>
    </reaction>
</comment>
<comment type="similarity">
    <text evidence="1">Belongs to the anti-sigma-factor family.</text>
</comment>